<sequence>MCSVEKIVRLRHNLLCHVRIHFKTKEDLDIRAFLFSLQRELHAVAFLNQGSIRTLYEKRVVDITSESVQSHAIIETARNFALPNTAEEEENMDRKPELQLSFKGSMTSKIIHIYVQPFDS</sequence>
<comment type="interaction">
    <interactant intactId="EBI-16120313">
        <id>Q9UUA8</id>
    </interactant>
    <interactant intactId="EBI-1559355">
        <id>O75004</id>
        <label>cdc24</label>
    </interactant>
    <organismsDiffer>false</organismsDiffer>
    <experiments>3</experiments>
</comment>
<comment type="subcellular location">
    <subcellularLocation>
        <location evidence="1">Cytoplasm</location>
    </subcellularLocation>
    <subcellularLocation>
        <location evidence="1">Nucleus</location>
    </subcellularLocation>
</comment>
<name>YHAG_SCHPO</name>
<proteinExistence type="evidence at protein level"/>
<evidence type="ECO:0000269" key="1">
    <source>
    </source>
</evidence>
<keyword id="KW-0963">Cytoplasm</keyword>
<keyword id="KW-0539">Nucleus</keyword>
<keyword id="KW-1185">Reference proteome</keyword>
<gene>
    <name type="ORF">SPBC409.16c</name>
</gene>
<organism>
    <name type="scientific">Schizosaccharomyces pombe (strain 972 / ATCC 24843)</name>
    <name type="common">Fission yeast</name>
    <dbReference type="NCBI Taxonomy" id="284812"/>
    <lineage>
        <taxon>Eukaryota</taxon>
        <taxon>Fungi</taxon>
        <taxon>Dikarya</taxon>
        <taxon>Ascomycota</taxon>
        <taxon>Taphrinomycotina</taxon>
        <taxon>Schizosaccharomycetes</taxon>
        <taxon>Schizosaccharomycetales</taxon>
        <taxon>Schizosaccharomycetaceae</taxon>
        <taxon>Schizosaccharomyces</taxon>
    </lineage>
</organism>
<reference key="1">
    <citation type="journal article" date="2002" name="Nature">
        <title>The genome sequence of Schizosaccharomyces pombe.</title>
        <authorList>
            <person name="Wood V."/>
            <person name="Gwilliam R."/>
            <person name="Rajandream M.A."/>
            <person name="Lyne M.H."/>
            <person name="Lyne R."/>
            <person name="Stewart A."/>
            <person name="Sgouros J.G."/>
            <person name="Peat N."/>
            <person name="Hayles J."/>
            <person name="Baker S.G."/>
            <person name="Basham D."/>
            <person name="Bowman S."/>
            <person name="Brooks K."/>
            <person name="Brown D."/>
            <person name="Brown S."/>
            <person name="Chillingworth T."/>
            <person name="Churcher C.M."/>
            <person name="Collins M."/>
            <person name="Connor R."/>
            <person name="Cronin A."/>
            <person name="Davis P."/>
            <person name="Feltwell T."/>
            <person name="Fraser A."/>
            <person name="Gentles S."/>
            <person name="Goble A."/>
            <person name="Hamlin N."/>
            <person name="Harris D.E."/>
            <person name="Hidalgo J."/>
            <person name="Hodgson G."/>
            <person name="Holroyd S."/>
            <person name="Hornsby T."/>
            <person name="Howarth S."/>
            <person name="Huckle E.J."/>
            <person name="Hunt S."/>
            <person name="Jagels K."/>
            <person name="James K.D."/>
            <person name="Jones L."/>
            <person name="Jones M."/>
            <person name="Leather S."/>
            <person name="McDonald S."/>
            <person name="McLean J."/>
            <person name="Mooney P."/>
            <person name="Moule S."/>
            <person name="Mungall K.L."/>
            <person name="Murphy L.D."/>
            <person name="Niblett D."/>
            <person name="Odell C."/>
            <person name="Oliver K."/>
            <person name="O'Neil S."/>
            <person name="Pearson D."/>
            <person name="Quail M.A."/>
            <person name="Rabbinowitsch E."/>
            <person name="Rutherford K.M."/>
            <person name="Rutter S."/>
            <person name="Saunders D."/>
            <person name="Seeger K."/>
            <person name="Sharp S."/>
            <person name="Skelton J."/>
            <person name="Simmonds M.N."/>
            <person name="Squares R."/>
            <person name="Squares S."/>
            <person name="Stevens K."/>
            <person name="Taylor K."/>
            <person name="Taylor R.G."/>
            <person name="Tivey A."/>
            <person name="Walsh S.V."/>
            <person name="Warren T."/>
            <person name="Whitehead S."/>
            <person name="Woodward J.R."/>
            <person name="Volckaert G."/>
            <person name="Aert R."/>
            <person name="Robben J."/>
            <person name="Grymonprez B."/>
            <person name="Weltjens I."/>
            <person name="Vanstreels E."/>
            <person name="Rieger M."/>
            <person name="Schaefer M."/>
            <person name="Mueller-Auer S."/>
            <person name="Gabel C."/>
            <person name="Fuchs M."/>
            <person name="Duesterhoeft A."/>
            <person name="Fritzc C."/>
            <person name="Holzer E."/>
            <person name="Moestl D."/>
            <person name="Hilbert H."/>
            <person name="Borzym K."/>
            <person name="Langer I."/>
            <person name="Beck A."/>
            <person name="Lehrach H."/>
            <person name="Reinhardt R."/>
            <person name="Pohl T.M."/>
            <person name="Eger P."/>
            <person name="Zimmermann W."/>
            <person name="Wedler H."/>
            <person name="Wambutt R."/>
            <person name="Purnelle B."/>
            <person name="Goffeau A."/>
            <person name="Cadieu E."/>
            <person name="Dreano S."/>
            <person name="Gloux S."/>
            <person name="Lelaure V."/>
            <person name="Mottier S."/>
            <person name="Galibert F."/>
            <person name="Aves S.J."/>
            <person name="Xiang Z."/>
            <person name="Hunt C."/>
            <person name="Moore K."/>
            <person name="Hurst S.M."/>
            <person name="Lucas M."/>
            <person name="Rochet M."/>
            <person name="Gaillardin C."/>
            <person name="Tallada V.A."/>
            <person name="Garzon A."/>
            <person name="Thode G."/>
            <person name="Daga R.R."/>
            <person name="Cruzado L."/>
            <person name="Jimenez J."/>
            <person name="Sanchez M."/>
            <person name="del Rey F."/>
            <person name="Benito J."/>
            <person name="Dominguez A."/>
            <person name="Revuelta J.L."/>
            <person name="Moreno S."/>
            <person name="Armstrong J."/>
            <person name="Forsburg S.L."/>
            <person name="Cerutti L."/>
            <person name="Lowe T."/>
            <person name="McCombie W.R."/>
            <person name="Paulsen I."/>
            <person name="Potashkin J."/>
            <person name="Shpakovski G.V."/>
            <person name="Ussery D."/>
            <person name="Barrell B.G."/>
            <person name="Nurse P."/>
        </authorList>
    </citation>
    <scope>NUCLEOTIDE SEQUENCE [LARGE SCALE GENOMIC DNA]</scope>
    <source>
        <strain>972 / ATCC 24843</strain>
    </source>
</reference>
<reference key="2">
    <citation type="journal article" date="2006" name="Nat. Biotechnol.">
        <title>ORFeome cloning and global analysis of protein localization in the fission yeast Schizosaccharomyces pombe.</title>
        <authorList>
            <person name="Matsuyama A."/>
            <person name="Arai R."/>
            <person name="Yashiroda Y."/>
            <person name="Shirai A."/>
            <person name="Kamata A."/>
            <person name="Sekido S."/>
            <person name="Kobayashi Y."/>
            <person name="Hashimoto A."/>
            <person name="Hamamoto M."/>
            <person name="Hiraoka Y."/>
            <person name="Horinouchi S."/>
            <person name="Yoshida M."/>
        </authorList>
    </citation>
    <scope>SUBCELLULAR LOCATION [LARGE SCALE ANALYSIS]</scope>
</reference>
<feature type="chain" id="PRO_0000304111" description="Uncharacterized protein C409.16c">
    <location>
        <begin position="1"/>
        <end position="120"/>
    </location>
</feature>
<dbReference type="EMBL" id="CU329671">
    <property type="protein sequence ID" value="CAB52618.1"/>
    <property type="molecule type" value="Genomic_DNA"/>
</dbReference>
<dbReference type="PIR" id="T40443">
    <property type="entry name" value="T40443"/>
</dbReference>
<dbReference type="BioGRID" id="277542">
    <property type="interactions" value="9"/>
</dbReference>
<dbReference type="DIP" id="DIP-61018N"/>
<dbReference type="FunCoup" id="Q9UUA8">
    <property type="interactions" value="5"/>
</dbReference>
<dbReference type="IntAct" id="Q9UUA8">
    <property type="interactions" value="5"/>
</dbReference>
<dbReference type="STRING" id="284812.Q9UUA8"/>
<dbReference type="PaxDb" id="4896-SPBC409.16c.1"/>
<dbReference type="EnsemblFungi" id="SPBC409.16c.1">
    <property type="protein sequence ID" value="SPBC409.16c.1:pep"/>
    <property type="gene ID" value="SPBC409.16c"/>
</dbReference>
<dbReference type="KEGG" id="spo:2541027"/>
<dbReference type="PomBase" id="SPBC409.16c"/>
<dbReference type="VEuPathDB" id="FungiDB:SPBC409.16c"/>
<dbReference type="HOGENOM" id="CLU_2062820_0_0_1"/>
<dbReference type="InParanoid" id="Q9UUA8"/>
<dbReference type="OMA" id="CHVRIHF"/>
<dbReference type="PRO" id="PR:Q9UUA8"/>
<dbReference type="Proteomes" id="UP000002485">
    <property type="component" value="Chromosome II"/>
</dbReference>
<dbReference type="GO" id="GO:0005829">
    <property type="term" value="C:cytosol"/>
    <property type="evidence" value="ECO:0007005"/>
    <property type="project" value="PomBase"/>
</dbReference>
<dbReference type="GO" id="GO:0005634">
    <property type="term" value="C:nucleus"/>
    <property type="evidence" value="ECO:0007005"/>
    <property type="project" value="PomBase"/>
</dbReference>
<dbReference type="GO" id="GO:0035861">
    <property type="term" value="C:site of double-strand break"/>
    <property type="evidence" value="ECO:0000314"/>
    <property type="project" value="PomBase"/>
</dbReference>
<dbReference type="GO" id="GO:0006310">
    <property type="term" value="P:DNA recombination"/>
    <property type="evidence" value="ECO:0000266"/>
    <property type="project" value="PomBase"/>
</dbReference>
<accession>Q9UUA8</accession>
<protein>
    <recommendedName>
        <fullName>Uncharacterized protein C409.16c</fullName>
    </recommendedName>
</protein>